<accession>Q145H9</accession>
<keyword id="KW-0963">Cytoplasm</keyword>
<keyword id="KW-0671">Queuosine biosynthesis</keyword>
<keyword id="KW-1185">Reference proteome</keyword>
<keyword id="KW-0949">S-adenosyl-L-methionine</keyword>
<keyword id="KW-0808">Transferase</keyword>
<name>QUEA_PARXL</name>
<proteinExistence type="inferred from homology"/>
<reference key="1">
    <citation type="journal article" date="2006" name="Proc. Natl. Acad. Sci. U.S.A.">
        <title>Burkholderia xenovorans LB400 harbors a multi-replicon, 9.73-Mbp genome shaped for versatility.</title>
        <authorList>
            <person name="Chain P.S.G."/>
            <person name="Denef V.J."/>
            <person name="Konstantinidis K.T."/>
            <person name="Vergez L.M."/>
            <person name="Agullo L."/>
            <person name="Reyes V.L."/>
            <person name="Hauser L."/>
            <person name="Cordova M."/>
            <person name="Gomez L."/>
            <person name="Gonzalez M."/>
            <person name="Land M."/>
            <person name="Lao V."/>
            <person name="Larimer F."/>
            <person name="LiPuma J.J."/>
            <person name="Mahenthiralingam E."/>
            <person name="Malfatti S.A."/>
            <person name="Marx C.J."/>
            <person name="Parnell J.J."/>
            <person name="Ramette A."/>
            <person name="Richardson P."/>
            <person name="Seeger M."/>
            <person name="Smith D."/>
            <person name="Spilker T."/>
            <person name="Sul W.J."/>
            <person name="Tsoi T.V."/>
            <person name="Ulrich L.E."/>
            <person name="Zhulin I.B."/>
            <person name="Tiedje J.M."/>
        </authorList>
    </citation>
    <scope>NUCLEOTIDE SEQUENCE [LARGE SCALE GENOMIC DNA]</scope>
    <source>
        <strain>LB400</strain>
    </source>
</reference>
<feature type="chain" id="PRO_1000015194" description="S-adenosylmethionine:tRNA ribosyltransferase-isomerase">
    <location>
        <begin position="1"/>
        <end position="352"/>
    </location>
</feature>
<evidence type="ECO:0000255" key="1">
    <source>
        <dbReference type="HAMAP-Rule" id="MF_00113"/>
    </source>
</evidence>
<dbReference type="EC" id="2.4.99.17" evidence="1"/>
<dbReference type="EMBL" id="CP000270">
    <property type="protein sequence ID" value="ABE29010.1"/>
    <property type="molecule type" value="Genomic_DNA"/>
</dbReference>
<dbReference type="RefSeq" id="WP_011486833.1">
    <property type="nucleotide sequence ID" value="NC_007951.1"/>
</dbReference>
<dbReference type="SMR" id="Q145H9"/>
<dbReference type="STRING" id="266265.Bxe_A3989"/>
<dbReference type="KEGG" id="bxb:DR64_1666"/>
<dbReference type="KEGG" id="bxe:Bxe_A3989"/>
<dbReference type="PATRIC" id="fig|266265.5.peg.499"/>
<dbReference type="eggNOG" id="COG0809">
    <property type="taxonomic scope" value="Bacteria"/>
</dbReference>
<dbReference type="OrthoDB" id="9805933at2"/>
<dbReference type="UniPathway" id="UPA00392"/>
<dbReference type="Proteomes" id="UP000001817">
    <property type="component" value="Chromosome 1"/>
</dbReference>
<dbReference type="GO" id="GO:0005737">
    <property type="term" value="C:cytoplasm"/>
    <property type="evidence" value="ECO:0007669"/>
    <property type="project" value="UniProtKB-SubCell"/>
</dbReference>
<dbReference type="GO" id="GO:0051075">
    <property type="term" value="F:S-adenosylmethionine:tRNA ribosyltransferase-isomerase activity"/>
    <property type="evidence" value="ECO:0007669"/>
    <property type="project" value="UniProtKB-EC"/>
</dbReference>
<dbReference type="GO" id="GO:0008616">
    <property type="term" value="P:queuosine biosynthetic process"/>
    <property type="evidence" value="ECO:0007669"/>
    <property type="project" value="UniProtKB-UniRule"/>
</dbReference>
<dbReference type="GO" id="GO:0002099">
    <property type="term" value="P:tRNA wobble guanine modification"/>
    <property type="evidence" value="ECO:0007669"/>
    <property type="project" value="TreeGrafter"/>
</dbReference>
<dbReference type="FunFam" id="3.40.1780.10:FF:000001">
    <property type="entry name" value="S-adenosylmethionine:tRNA ribosyltransferase-isomerase"/>
    <property type="match status" value="1"/>
</dbReference>
<dbReference type="Gene3D" id="2.40.10.240">
    <property type="entry name" value="QueA-like"/>
    <property type="match status" value="1"/>
</dbReference>
<dbReference type="Gene3D" id="3.40.1780.10">
    <property type="entry name" value="QueA-like"/>
    <property type="match status" value="1"/>
</dbReference>
<dbReference type="HAMAP" id="MF_00113">
    <property type="entry name" value="QueA"/>
    <property type="match status" value="1"/>
</dbReference>
<dbReference type="InterPro" id="IPR003699">
    <property type="entry name" value="QueA"/>
</dbReference>
<dbReference type="InterPro" id="IPR042118">
    <property type="entry name" value="QueA_dom1"/>
</dbReference>
<dbReference type="InterPro" id="IPR042119">
    <property type="entry name" value="QueA_dom2"/>
</dbReference>
<dbReference type="InterPro" id="IPR036100">
    <property type="entry name" value="QueA_sf"/>
</dbReference>
<dbReference type="NCBIfam" id="NF001140">
    <property type="entry name" value="PRK00147.1"/>
    <property type="match status" value="1"/>
</dbReference>
<dbReference type="NCBIfam" id="TIGR00113">
    <property type="entry name" value="queA"/>
    <property type="match status" value="1"/>
</dbReference>
<dbReference type="PANTHER" id="PTHR30307">
    <property type="entry name" value="S-ADENOSYLMETHIONINE:TRNA RIBOSYLTRANSFERASE-ISOMERASE"/>
    <property type="match status" value="1"/>
</dbReference>
<dbReference type="PANTHER" id="PTHR30307:SF0">
    <property type="entry name" value="S-ADENOSYLMETHIONINE:TRNA RIBOSYLTRANSFERASE-ISOMERASE"/>
    <property type="match status" value="1"/>
</dbReference>
<dbReference type="Pfam" id="PF02547">
    <property type="entry name" value="Queuosine_synth"/>
    <property type="match status" value="1"/>
</dbReference>
<dbReference type="SUPFAM" id="SSF111337">
    <property type="entry name" value="QueA-like"/>
    <property type="match status" value="1"/>
</dbReference>
<organism>
    <name type="scientific">Paraburkholderia xenovorans (strain LB400)</name>
    <dbReference type="NCBI Taxonomy" id="266265"/>
    <lineage>
        <taxon>Bacteria</taxon>
        <taxon>Pseudomonadati</taxon>
        <taxon>Pseudomonadota</taxon>
        <taxon>Betaproteobacteria</taxon>
        <taxon>Burkholderiales</taxon>
        <taxon>Burkholderiaceae</taxon>
        <taxon>Paraburkholderia</taxon>
    </lineage>
</organism>
<comment type="function">
    <text evidence="1">Transfers and isomerizes the ribose moiety from AdoMet to the 7-aminomethyl group of 7-deazaguanine (preQ1-tRNA) to give epoxyqueuosine (oQ-tRNA).</text>
</comment>
<comment type="catalytic activity">
    <reaction evidence="1">
        <text>7-aminomethyl-7-carbaguanosine(34) in tRNA + S-adenosyl-L-methionine = epoxyqueuosine(34) in tRNA + adenine + L-methionine + 2 H(+)</text>
        <dbReference type="Rhea" id="RHEA:32155"/>
        <dbReference type="Rhea" id="RHEA-COMP:10342"/>
        <dbReference type="Rhea" id="RHEA-COMP:18582"/>
        <dbReference type="ChEBI" id="CHEBI:15378"/>
        <dbReference type="ChEBI" id="CHEBI:16708"/>
        <dbReference type="ChEBI" id="CHEBI:57844"/>
        <dbReference type="ChEBI" id="CHEBI:59789"/>
        <dbReference type="ChEBI" id="CHEBI:82833"/>
        <dbReference type="ChEBI" id="CHEBI:194443"/>
        <dbReference type="EC" id="2.4.99.17"/>
    </reaction>
</comment>
<comment type="pathway">
    <text evidence="1">tRNA modification; tRNA-queuosine biosynthesis.</text>
</comment>
<comment type="subunit">
    <text evidence="1">Monomer.</text>
</comment>
<comment type="subcellular location">
    <subcellularLocation>
        <location evidence="1">Cytoplasm</location>
    </subcellularLocation>
</comment>
<comment type="similarity">
    <text evidence="1">Belongs to the QueA family.</text>
</comment>
<sequence length="352" mass="38549">MLTLSDFDFDLPPELIAQVALPERSASRLLEVDNPAGATGPARLIDRRFAELPDCIAAGDLLVFNDTKVLKARFLGQKASGGKIEVLVERLTGERTALAQIRASKSPQPGTTIRLADAFDVTVGERVEPFYTLHFPADCLTLIEQFGRLPLPPYIEHDPDATDETRYQTVFAQNPGAVAAPTAGLHFDEALLARLDAAGVERATLTLHVGAGTFQPVRVENLAEHKMHSEWYHLPQSLADKIAATRARGNRVIAVGTTSMRALEAAARDAEAAGRPLAAASTETDIFITPGYRFRVVDRLVTNFHLPKSTLLMLVSAFAGVETIREAYRHAIEARYRFFSYGDAMLLTRRDA</sequence>
<protein>
    <recommendedName>
        <fullName evidence="1">S-adenosylmethionine:tRNA ribosyltransferase-isomerase</fullName>
        <ecNumber evidence="1">2.4.99.17</ecNumber>
    </recommendedName>
    <alternativeName>
        <fullName evidence="1">Queuosine biosynthesis protein QueA</fullName>
    </alternativeName>
</protein>
<gene>
    <name evidence="1" type="primary">queA</name>
    <name type="ordered locus">Bxeno_A0472</name>
    <name type="ORF">Bxe_A3989</name>
</gene>